<proteinExistence type="evidence at protein level"/>
<sequence length="304" mass="34798">MISDYDALLQFNKKPVSQEMIQFLATSTASIIKIRENNNPIQGCRPPDLSIFIKNVVIQSNVQTPTLMATSVYLNKLKSVIPKNVYGINTTRHRIFLGCLILAAKTLNDSSPWNKHWTTYTEGLLRIREVNTIERELLEYLNWDVRITTPDLIDSLSYFLGPIKEQLFLQRRQEMLLFNAPSPGQLKEYINHRRPVSHSRTSSAISVPSLTSMATVSTTDSRSSLLAKYQPSLPLVESDNFNKKNHVPLRNNNDICNNFRAEENIHSVNHIDVTMGSSPVMSHKPTIHQRLNFTRRGWSSFFKQ</sequence>
<feature type="chain" id="PRO_0000271788" description="PHO85 cyclin-9">
    <location>
        <begin position="1"/>
        <end position="304"/>
    </location>
</feature>
<feature type="domain" description="Cyclin N-terminal">
    <location>
        <begin position="19"/>
        <end position="146"/>
    </location>
</feature>
<reference key="1">
    <citation type="journal article" date="1997" name="Nature">
        <title>The nucleotide sequence of Saccharomyces cerevisiae chromosome IV.</title>
        <authorList>
            <person name="Jacq C."/>
            <person name="Alt-Moerbe J."/>
            <person name="Andre B."/>
            <person name="Arnold W."/>
            <person name="Bahr A."/>
            <person name="Ballesta J.P.G."/>
            <person name="Bargues M."/>
            <person name="Baron L."/>
            <person name="Becker A."/>
            <person name="Biteau N."/>
            <person name="Bloecker H."/>
            <person name="Blugeon C."/>
            <person name="Boskovic J."/>
            <person name="Brandt P."/>
            <person name="Brueckner M."/>
            <person name="Buitrago M.J."/>
            <person name="Coster F."/>
            <person name="Delaveau T."/>
            <person name="del Rey F."/>
            <person name="Dujon B."/>
            <person name="Eide L.G."/>
            <person name="Garcia-Cantalejo J.M."/>
            <person name="Goffeau A."/>
            <person name="Gomez-Peris A."/>
            <person name="Granotier C."/>
            <person name="Hanemann V."/>
            <person name="Hankeln T."/>
            <person name="Hoheisel J.D."/>
            <person name="Jaeger W."/>
            <person name="Jimenez A."/>
            <person name="Jonniaux J.-L."/>
            <person name="Kraemer C."/>
            <person name="Kuester H."/>
            <person name="Laamanen P."/>
            <person name="Legros Y."/>
            <person name="Louis E.J."/>
            <person name="Moeller-Rieker S."/>
            <person name="Monnet A."/>
            <person name="Moro M."/>
            <person name="Mueller-Auer S."/>
            <person name="Nussbaumer B."/>
            <person name="Paricio N."/>
            <person name="Paulin L."/>
            <person name="Perea J."/>
            <person name="Perez-Alonso M."/>
            <person name="Perez-Ortin J.E."/>
            <person name="Pohl T.M."/>
            <person name="Prydz H."/>
            <person name="Purnelle B."/>
            <person name="Rasmussen S.W."/>
            <person name="Remacha M.A."/>
            <person name="Revuelta J.L."/>
            <person name="Rieger M."/>
            <person name="Salom D."/>
            <person name="Saluz H.P."/>
            <person name="Saiz J.E."/>
            <person name="Saren A.-M."/>
            <person name="Schaefer M."/>
            <person name="Scharfe M."/>
            <person name="Schmidt E.R."/>
            <person name="Schneider C."/>
            <person name="Scholler P."/>
            <person name="Schwarz S."/>
            <person name="Soler-Mira A."/>
            <person name="Urrestarazu L.A."/>
            <person name="Verhasselt P."/>
            <person name="Vissers S."/>
            <person name="Voet M."/>
            <person name="Volckaert G."/>
            <person name="Wagner G."/>
            <person name="Wambutt R."/>
            <person name="Wedler E."/>
            <person name="Wedler H."/>
            <person name="Woelfl S."/>
            <person name="Harris D.E."/>
            <person name="Bowman S."/>
            <person name="Brown D."/>
            <person name="Churcher C.M."/>
            <person name="Connor R."/>
            <person name="Dedman K."/>
            <person name="Gentles S."/>
            <person name="Hamlin N."/>
            <person name="Hunt S."/>
            <person name="Jones L."/>
            <person name="McDonald S."/>
            <person name="Murphy L.D."/>
            <person name="Niblett D."/>
            <person name="Odell C."/>
            <person name="Oliver K."/>
            <person name="Rajandream M.A."/>
            <person name="Richards C."/>
            <person name="Shore L."/>
            <person name="Walsh S.V."/>
            <person name="Barrell B.G."/>
            <person name="Dietrich F.S."/>
            <person name="Mulligan J.T."/>
            <person name="Allen E."/>
            <person name="Araujo R."/>
            <person name="Aviles E."/>
            <person name="Berno A."/>
            <person name="Carpenter J."/>
            <person name="Chen E."/>
            <person name="Cherry J.M."/>
            <person name="Chung E."/>
            <person name="Duncan M."/>
            <person name="Hunicke-Smith S."/>
            <person name="Hyman R.W."/>
            <person name="Komp C."/>
            <person name="Lashkari D."/>
            <person name="Lew H."/>
            <person name="Lin D."/>
            <person name="Mosedale D."/>
            <person name="Nakahara K."/>
            <person name="Namath A."/>
            <person name="Oefner P."/>
            <person name="Oh C."/>
            <person name="Petel F.X."/>
            <person name="Roberts D."/>
            <person name="Schramm S."/>
            <person name="Schroeder M."/>
            <person name="Shogren T."/>
            <person name="Shroff N."/>
            <person name="Winant A."/>
            <person name="Yelton M.A."/>
            <person name="Botstein D."/>
            <person name="Davis R.W."/>
            <person name="Johnston M."/>
            <person name="Andrews S."/>
            <person name="Brinkman R."/>
            <person name="Cooper J."/>
            <person name="Ding H."/>
            <person name="Du Z."/>
            <person name="Favello A."/>
            <person name="Fulton L."/>
            <person name="Gattung S."/>
            <person name="Greco T."/>
            <person name="Hallsworth K."/>
            <person name="Hawkins J."/>
            <person name="Hillier L.W."/>
            <person name="Jier M."/>
            <person name="Johnson D."/>
            <person name="Johnston L."/>
            <person name="Kirsten J."/>
            <person name="Kucaba T."/>
            <person name="Langston Y."/>
            <person name="Latreille P."/>
            <person name="Le T."/>
            <person name="Mardis E."/>
            <person name="Menezes S."/>
            <person name="Miller N."/>
            <person name="Nhan M."/>
            <person name="Pauley A."/>
            <person name="Peluso D."/>
            <person name="Rifkin L."/>
            <person name="Riles L."/>
            <person name="Taich A."/>
            <person name="Trevaskis E."/>
            <person name="Vignati D."/>
            <person name="Wilcox L."/>
            <person name="Wohldman P."/>
            <person name="Vaudin M."/>
            <person name="Wilson R."/>
            <person name="Waterston R."/>
            <person name="Albermann K."/>
            <person name="Hani J."/>
            <person name="Heumann K."/>
            <person name="Kleine K."/>
            <person name="Mewes H.-W."/>
            <person name="Zollner A."/>
            <person name="Zaccaria P."/>
        </authorList>
    </citation>
    <scope>NUCLEOTIDE SEQUENCE [LARGE SCALE GENOMIC DNA]</scope>
    <source>
        <strain>ATCC 204508 / S288c</strain>
    </source>
</reference>
<reference key="2">
    <citation type="journal article" date="2014" name="G3 (Bethesda)">
        <title>The reference genome sequence of Saccharomyces cerevisiae: Then and now.</title>
        <authorList>
            <person name="Engel S.R."/>
            <person name="Dietrich F.S."/>
            <person name="Fisk D.G."/>
            <person name="Binkley G."/>
            <person name="Balakrishnan R."/>
            <person name="Costanzo M.C."/>
            <person name="Dwight S.S."/>
            <person name="Hitz B.C."/>
            <person name="Karra K."/>
            <person name="Nash R.S."/>
            <person name="Weng S."/>
            <person name="Wong E.D."/>
            <person name="Lloyd P."/>
            <person name="Skrzypek M.S."/>
            <person name="Miyasato S.R."/>
            <person name="Simison M."/>
            <person name="Cherry J.M."/>
        </authorList>
    </citation>
    <scope>GENOME REANNOTATION</scope>
    <source>
        <strain>ATCC 204508 / S288c</strain>
    </source>
</reference>
<reference key="3">
    <citation type="journal article" date="2007" name="Genome Res.">
        <title>Approaching a complete repository of sequence-verified protein-encoding clones for Saccharomyces cerevisiae.</title>
        <authorList>
            <person name="Hu Y."/>
            <person name="Rolfs A."/>
            <person name="Bhullar B."/>
            <person name="Murthy T.V.S."/>
            <person name="Zhu C."/>
            <person name="Berger M.F."/>
            <person name="Camargo A.A."/>
            <person name="Kelley F."/>
            <person name="McCarron S."/>
            <person name="Jepson D."/>
            <person name="Richardson A."/>
            <person name="Raphael J."/>
            <person name="Moreira D."/>
            <person name="Taycher E."/>
            <person name="Zuo D."/>
            <person name="Mohr S."/>
            <person name="Kane M.F."/>
            <person name="Williamson J."/>
            <person name="Simpson A.J.G."/>
            <person name="Bulyk M.L."/>
            <person name="Harlow E."/>
            <person name="Marsischky G."/>
            <person name="Kolodner R.D."/>
            <person name="LaBaer J."/>
        </authorList>
    </citation>
    <scope>NUCLEOTIDE SEQUENCE [GENOMIC DNA]</scope>
    <source>
        <strain>ATCC 204508 / S288c</strain>
    </source>
</reference>
<reference key="4">
    <citation type="journal article" date="1997" name="Mol. Cell. Biol.">
        <title>A family of cyclin-like proteins that interact with the Pho85 cyclin-dependent kinase.</title>
        <authorList>
            <person name="Measday V."/>
            <person name="Moore L."/>
            <person name="Retnakaran R."/>
            <person name="Lee J."/>
            <person name="Donoviel M."/>
            <person name="Neiman A.M."/>
            <person name="Andrews B.J."/>
        </authorList>
    </citation>
    <scope>INTERACTION WITH PHO85</scope>
    <scope>INDUCTION</scope>
</reference>
<reference key="5">
    <citation type="journal article" date="1998" name="Mol. Biol. Cell">
        <title>Swi5 controls a novel wave of cyclin synthesis in late mitosis.</title>
        <authorList>
            <person name="Aerne B.L."/>
            <person name="Johnson A.L."/>
            <person name="Toyn J.H."/>
            <person name="Johnston L.H."/>
        </authorList>
    </citation>
    <scope>FUNCTION</scope>
    <scope>INTERACTION WITH PHO85</scope>
    <scope>INDUCTION</scope>
</reference>
<reference key="6">
    <citation type="journal article" date="1998" name="Mol. Microbiol.">
        <title>A role for the Pcl9-Pho85 cyclin-cdk complex at the M/G1 boundary in Saccharomyces cerevisiae.</title>
        <authorList>
            <person name="Tennyson C.N."/>
            <person name="Lee J."/>
            <person name="Andrews B.J."/>
        </authorList>
    </citation>
    <scope>FUNCTION</scope>
    <scope>INTERACTION WITH PHO85</scope>
</reference>
<dbReference type="EMBL" id="Z67750">
    <property type="protein sequence ID" value="CAA91566.1"/>
    <property type="molecule type" value="Genomic_DNA"/>
</dbReference>
<dbReference type="EMBL" id="Z74227">
    <property type="protein sequence ID" value="CAA98753.1"/>
    <property type="molecule type" value="Genomic_DNA"/>
</dbReference>
<dbReference type="EMBL" id="AY557655">
    <property type="protein sequence ID" value="AAS55981.1"/>
    <property type="molecule type" value="Genomic_DNA"/>
</dbReference>
<dbReference type="EMBL" id="BK006938">
    <property type="protein sequence ID" value="DAA11683.1"/>
    <property type="molecule type" value="Genomic_DNA"/>
</dbReference>
<dbReference type="PIR" id="S61033">
    <property type="entry name" value="S61033"/>
</dbReference>
<dbReference type="RefSeq" id="NP_010102.1">
    <property type="nucleotide sequence ID" value="NM_001180239.1"/>
</dbReference>
<dbReference type="SMR" id="Q12477"/>
<dbReference type="BioGRID" id="31887">
    <property type="interactions" value="66"/>
</dbReference>
<dbReference type="ComplexPortal" id="CPX-1697">
    <property type="entry name" value="PCL9-PHO85 kinase complex"/>
</dbReference>
<dbReference type="DIP" id="DIP-1510N"/>
<dbReference type="FunCoup" id="Q12477">
    <property type="interactions" value="279"/>
</dbReference>
<dbReference type="IntAct" id="Q12477">
    <property type="interactions" value="15"/>
</dbReference>
<dbReference type="MINT" id="Q12477"/>
<dbReference type="STRING" id="4932.YDL179W"/>
<dbReference type="PaxDb" id="4932-YDL179W"/>
<dbReference type="PeptideAtlas" id="Q12477"/>
<dbReference type="EnsemblFungi" id="YDL179W_mRNA">
    <property type="protein sequence ID" value="YDL179W"/>
    <property type="gene ID" value="YDL179W"/>
</dbReference>
<dbReference type="GeneID" id="851375"/>
<dbReference type="KEGG" id="sce:YDL179W"/>
<dbReference type="AGR" id="SGD:S000002338"/>
<dbReference type="SGD" id="S000002338">
    <property type="gene designation" value="PCL9"/>
</dbReference>
<dbReference type="VEuPathDB" id="FungiDB:YDL179W"/>
<dbReference type="eggNOG" id="KOG1674">
    <property type="taxonomic scope" value="Eukaryota"/>
</dbReference>
<dbReference type="GeneTree" id="ENSGT00390000000862"/>
<dbReference type="HOGENOM" id="CLU_018149_0_0_1"/>
<dbReference type="InParanoid" id="Q12477"/>
<dbReference type="OMA" id="INTTRHR"/>
<dbReference type="OrthoDB" id="10250320at2759"/>
<dbReference type="BioCyc" id="YEAST:G3O-29566-MONOMER"/>
<dbReference type="BioGRID-ORCS" id="851375">
    <property type="hits" value="0 hits in 10 CRISPR screens"/>
</dbReference>
<dbReference type="PRO" id="PR:Q12477"/>
<dbReference type="Proteomes" id="UP000002311">
    <property type="component" value="Chromosome IV"/>
</dbReference>
<dbReference type="RNAct" id="Q12477">
    <property type="molecule type" value="protein"/>
</dbReference>
<dbReference type="GO" id="GO:0005935">
    <property type="term" value="C:cellular bud neck"/>
    <property type="evidence" value="ECO:0000314"/>
    <property type="project" value="SGD"/>
</dbReference>
<dbReference type="GO" id="GO:0000307">
    <property type="term" value="C:cyclin-dependent protein kinase holoenzyme complex"/>
    <property type="evidence" value="ECO:0000353"/>
    <property type="project" value="ComplexPortal"/>
</dbReference>
<dbReference type="GO" id="GO:0000131">
    <property type="term" value="C:incipient cellular bud site"/>
    <property type="evidence" value="ECO:0000314"/>
    <property type="project" value="SGD"/>
</dbReference>
<dbReference type="GO" id="GO:0005634">
    <property type="term" value="C:nucleus"/>
    <property type="evidence" value="ECO:0000318"/>
    <property type="project" value="GO_Central"/>
</dbReference>
<dbReference type="GO" id="GO:0016538">
    <property type="term" value="F:cyclin-dependent protein serine/threonine kinase regulator activity"/>
    <property type="evidence" value="ECO:0000315"/>
    <property type="project" value="SGD"/>
</dbReference>
<dbReference type="GO" id="GO:0019901">
    <property type="term" value="F:protein kinase binding"/>
    <property type="evidence" value="ECO:0007669"/>
    <property type="project" value="InterPro"/>
</dbReference>
<dbReference type="GO" id="GO:0051301">
    <property type="term" value="P:cell division"/>
    <property type="evidence" value="ECO:0007669"/>
    <property type="project" value="UniProtKB-KW"/>
</dbReference>
<dbReference type="GO" id="GO:0000082">
    <property type="term" value="P:G1/S transition of mitotic cell cycle"/>
    <property type="evidence" value="ECO:0000314"/>
    <property type="project" value="ComplexPortal"/>
</dbReference>
<dbReference type="GO" id="GO:0051726">
    <property type="term" value="P:regulation of cell cycle"/>
    <property type="evidence" value="ECO:0007669"/>
    <property type="project" value="InterPro"/>
</dbReference>
<dbReference type="GO" id="GO:0006355">
    <property type="term" value="P:regulation of DNA-templated transcription"/>
    <property type="evidence" value="ECO:0000314"/>
    <property type="project" value="ComplexPortal"/>
</dbReference>
<dbReference type="GO" id="GO:0032878">
    <property type="term" value="P:regulation of establishment or maintenance of cell polarity"/>
    <property type="evidence" value="ECO:0000316"/>
    <property type="project" value="SGD"/>
</dbReference>
<dbReference type="GO" id="GO:0006357">
    <property type="term" value="P:regulation of transcription by RNA polymerase II"/>
    <property type="evidence" value="ECO:0000353"/>
    <property type="project" value="SGD"/>
</dbReference>
<dbReference type="CDD" id="cd20557">
    <property type="entry name" value="CYCLIN_ScPCL1-like"/>
    <property type="match status" value="1"/>
</dbReference>
<dbReference type="FunFam" id="1.10.472.10:FF:000084">
    <property type="entry name" value="PCL9p Cyclin"/>
    <property type="match status" value="1"/>
</dbReference>
<dbReference type="Gene3D" id="1.10.472.10">
    <property type="entry name" value="Cyclin-like"/>
    <property type="match status" value="1"/>
</dbReference>
<dbReference type="InterPro" id="IPR013763">
    <property type="entry name" value="Cyclin-like_dom"/>
</dbReference>
<dbReference type="InterPro" id="IPR036915">
    <property type="entry name" value="Cyclin-like_sf"/>
</dbReference>
<dbReference type="InterPro" id="IPR006671">
    <property type="entry name" value="Cyclin_N"/>
</dbReference>
<dbReference type="InterPro" id="IPR013922">
    <property type="entry name" value="Cyclin_PHO80-like"/>
</dbReference>
<dbReference type="InterPro" id="IPR012104">
    <property type="entry name" value="PHO85_cyclin_1/2/9"/>
</dbReference>
<dbReference type="PANTHER" id="PTHR15615">
    <property type="match status" value="1"/>
</dbReference>
<dbReference type="PANTHER" id="PTHR15615:SF10">
    <property type="entry name" value="PHO85 CYCLIN-2-RELATED"/>
    <property type="match status" value="1"/>
</dbReference>
<dbReference type="Pfam" id="PF00134">
    <property type="entry name" value="Cyclin_N"/>
    <property type="match status" value="1"/>
</dbReference>
<dbReference type="PIRSF" id="PIRSF016511">
    <property type="entry name" value="Cyclin_Pcl"/>
    <property type="match status" value="1"/>
</dbReference>
<dbReference type="SMART" id="SM00385">
    <property type="entry name" value="CYCLIN"/>
    <property type="match status" value="1"/>
</dbReference>
<dbReference type="SUPFAM" id="SSF47954">
    <property type="entry name" value="Cyclin-like"/>
    <property type="match status" value="1"/>
</dbReference>
<protein>
    <recommendedName>
        <fullName>PHO85 cyclin-9</fullName>
    </recommendedName>
</protein>
<accession>Q12477</accession>
<accession>D6VRH3</accession>
<keyword id="KW-0131">Cell cycle</keyword>
<keyword id="KW-0132">Cell division</keyword>
<keyword id="KW-0195">Cyclin</keyword>
<keyword id="KW-1185">Reference proteome</keyword>
<organism>
    <name type="scientific">Saccharomyces cerevisiae (strain ATCC 204508 / S288c)</name>
    <name type="common">Baker's yeast</name>
    <dbReference type="NCBI Taxonomy" id="559292"/>
    <lineage>
        <taxon>Eukaryota</taxon>
        <taxon>Fungi</taxon>
        <taxon>Dikarya</taxon>
        <taxon>Ascomycota</taxon>
        <taxon>Saccharomycotina</taxon>
        <taxon>Saccharomycetes</taxon>
        <taxon>Saccharomycetales</taxon>
        <taxon>Saccharomycetaceae</taxon>
        <taxon>Saccharomyces</taxon>
    </lineage>
</organism>
<evidence type="ECO:0000269" key="1">
    <source>
    </source>
</evidence>
<evidence type="ECO:0000269" key="2">
    <source>
    </source>
</evidence>
<evidence type="ECO:0000269" key="3">
    <source>
    </source>
</evidence>
<evidence type="ECO:0000305" key="4"/>
<name>PCL9_YEAST</name>
<gene>
    <name type="primary">PCL9</name>
    <name type="ordered locus">YDL179W</name>
    <name type="ORF">D1408</name>
</gene>
<comment type="function">
    <text evidence="2 3">M/G1-specific cyclin partner of the cyclin-dependent kinase (CDK) PHO85. May have a role in bud site selection in G1 phase.</text>
</comment>
<comment type="subunit">
    <text>Forms a cyclin-CDK complex with PHO85.</text>
</comment>
<comment type="interaction">
    <interactant intactId="EBI-38090">
        <id>Q12477</id>
    </interactant>
    <interactant intactId="EBI-13327">
        <id>P17157</id>
        <label>PHO85</label>
    </interactant>
    <organismsDiffer>false</organismsDiffer>
    <experiments>4</experiments>
</comment>
<comment type="induction">
    <text evidence="1 2">By transcription factor SWI5 in a cell cycle-regulated manner. Peaks in late M, early G1 phase (at protein level).</text>
</comment>
<comment type="similarity">
    <text evidence="4">Belongs to the cyclin family. PCL1,2 subfamily.</text>
</comment>